<accession>B6I260</accession>
<sequence length="119" mass="13121">MINPNPKRSDEPVFWGLFGAGGMWSAIIAPVMILLVGILLPLGLFPGDALSYERVLAFAQSFIGRVFLFLMIVLPLWCGLHRMHHAMHDLKIHVPAGKWVFYGLAAILTVVTLIGIVTI</sequence>
<comment type="function">
    <text evidence="1">Two distinct, membrane-bound, FAD-containing enzymes are responsible for the catalysis of fumarate and succinate interconversion; fumarate reductase is used in anaerobic growth, and succinate dehydrogenase is used in aerobic growth. Anchors the catalytic components of the fumarate reductase complex to the cell inner membrane, binds quinones.</text>
</comment>
<comment type="subunit">
    <text evidence="1">Part of an enzyme complex containing four subunits: a flavoprotein (FrdA), an iron-sulfur protein (FrdB), and two hydrophobic anchor proteins (FrdC and FrdD).</text>
</comment>
<comment type="subcellular location">
    <subcellularLocation>
        <location evidence="1">Cell inner membrane</location>
        <topology evidence="1">Multi-pass membrane protein</topology>
    </subcellularLocation>
</comment>
<comment type="similarity">
    <text evidence="1">Belongs to the FrdD family.</text>
</comment>
<evidence type="ECO:0000255" key="1">
    <source>
        <dbReference type="HAMAP-Rule" id="MF_00709"/>
    </source>
</evidence>
<reference key="1">
    <citation type="journal article" date="2008" name="DNA Res.">
        <title>Complete genome sequence and comparative analysis of the wild-type commensal Escherichia coli strain SE11 isolated from a healthy adult.</title>
        <authorList>
            <person name="Oshima K."/>
            <person name="Toh H."/>
            <person name="Ogura Y."/>
            <person name="Sasamoto H."/>
            <person name="Morita H."/>
            <person name="Park S.-H."/>
            <person name="Ooka T."/>
            <person name="Iyoda S."/>
            <person name="Taylor T.D."/>
            <person name="Hayashi T."/>
            <person name="Itoh K."/>
            <person name="Hattori M."/>
        </authorList>
    </citation>
    <scope>NUCLEOTIDE SEQUENCE [LARGE SCALE GENOMIC DNA]</scope>
    <source>
        <strain>SE11</strain>
    </source>
</reference>
<protein>
    <recommendedName>
        <fullName evidence="1">Fumarate reductase subunit D</fullName>
    </recommendedName>
    <alternativeName>
        <fullName evidence="1">Fumarate reductase 13 kDa hydrophobic protein</fullName>
    </alternativeName>
    <alternativeName>
        <fullName evidence="1">Quinol-fumarate reductase subunit D</fullName>
        <shortName evidence="1">QFR subunit D</shortName>
    </alternativeName>
</protein>
<name>FRDD_ECOSE</name>
<organism>
    <name type="scientific">Escherichia coli (strain SE11)</name>
    <dbReference type="NCBI Taxonomy" id="409438"/>
    <lineage>
        <taxon>Bacteria</taxon>
        <taxon>Pseudomonadati</taxon>
        <taxon>Pseudomonadota</taxon>
        <taxon>Gammaproteobacteria</taxon>
        <taxon>Enterobacterales</taxon>
        <taxon>Enterobacteriaceae</taxon>
        <taxon>Escherichia</taxon>
    </lineage>
</organism>
<dbReference type="EMBL" id="AP009240">
    <property type="protein sequence ID" value="BAG79977.1"/>
    <property type="molecule type" value="Genomic_DNA"/>
</dbReference>
<dbReference type="RefSeq" id="WP_001299198.1">
    <property type="nucleotide sequence ID" value="NC_011415.1"/>
</dbReference>
<dbReference type="SMR" id="B6I260"/>
<dbReference type="GeneID" id="93777671"/>
<dbReference type="KEGG" id="ecy:ECSE_4453"/>
<dbReference type="HOGENOM" id="CLU_168367_0_0_6"/>
<dbReference type="Proteomes" id="UP000008199">
    <property type="component" value="Chromosome"/>
</dbReference>
<dbReference type="GO" id="GO:0045283">
    <property type="term" value="C:fumarate reductase complex"/>
    <property type="evidence" value="ECO:0007669"/>
    <property type="project" value="UniProtKB-UniRule"/>
</dbReference>
<dbReference type="GO" id="GO:0005886">
    <property type="term" value="C:plasma membrane"/>
    <property type="evidence" value="ECO:0007669"/>
    <property type="project" value="UniProtKB-SubCell"/>
</dbReference>
<dbReference type="GO" id="GO:0000104">
    <property type="term" value="F:succinate dehydrogenase activity"/>
    <property type="evidence" value="ECO:0007669"/>
    <property type="project" value="UniProtKB-UniRule"/>
</dbReference>
<dbReference type="GO" id="GO:0006106">
    <property type="term" value="P:fumarate metabolic process"/>
    <property type="evidence" value="ECO:0007669"/>
    <property type="project" value="InterPro"/>
</dbReference>
<dbReference type="CDD" id="cd00547">
    <property type="entry name" value="QFR_TypeD_subunitD"/>
    <property type="match status" value="1"/>
</dbReference>
<dbReference type="FunFam" id="1.20.1300.10:FF:000002">
    <property type="entry name" value="Fumarate reductase subunit D"/>
    <property type="match status" value="1"/>
</dbReference>
<dbReference type="Gene3D" id="1.20.1300.10">
    <property type="entry name" value="Fumarate reductase/succinate dehydrogenase, transmembrane subunit"/>
    <property type="match status" value="1"/>
</dbReference>
<dbReference type="HAMAP" id="MF_00709">
    <property type="entry name" value="Fumarate_red_D"/>
    <property type="match status" value="1"/>
</dbReference>
<dbReference type="InterPro" id="IPR003418">
    <property type="entry name" value="Fumarate_red_D"/>
</dbReference>
<dbReference type="InterPro" id="IPR034804">
    <property type="entry name" value="SQR/QFR_C/D"/>
</dbReference>
<dbReference type="NCBIfam" id="NF003977">
    <property type="entry name" value="PRK05470.1-1"/>
    <property type="match status" value="1"/>
</dbReference>
<dbReference type="Pfam" id="PF02313">
    <property type="entry name" value="Fumarate_red_D"/>
    <property type="match status" value="1"/>
</dbReference>
<dbReference type="PIRSF" id="PIRSF000179">
    <property type="entry name" value="FrdD"/>
    <property type="match status" value="1"/>
</dbReference>
<dbReference type="SUPFAM" id="SSF81343">
    <property type="entry name" value="Fumarate reductase respiratory complex transmembrane subunits"/>
    <property type="match status" value="1"/>
</dbReference>
<feature type="chain" id="PRO_1000132402" description="Fumarate reductase subunit D">
    <location>
        <begin position="1"/>
        <end position="119"/>
    </location>
</feature>
<feature type="transmembrane region" description="Helical" evidence="1">
    <location>
        <begin position="26"/>
        <end position="46"/>
    </location>
</feature>
<feature type="transmembrane region" description="Helical" evidence="1">
    <location>
        <begin position="55"/>
        <end position="75"/>
    </location>
</feature>
<feature type="transmembrane region" description="Helical" evidence="1">
    <location>
        <begin position="99"/>
        <end position="119"/>
    </location>
</feature>
<keyword id="KW-0997">Cell inner membrane</keyword>
<keyword id="KW-1003">Cell membrane</keyword>
<keyword id="KW-0472">Membrane</keyword>
<keyword id="KW-0812">Transmembrane</keyword>
<keyword id="KW-1133">Transmembrane helix</keyword>
<proteinExistence type="inferred from homology"/>
<gene>
    <name evidence="1" type="primary">frdD</name>
    <name type="ordered locus">ECSE_4453</name>
</gene>